<protein>
    <recommendedName>
        <fullName evidence="3">Galactoside alpha-(1,2)-fucosyltransferase 1</fullName>
    </recommendedName>
    <alternativeName>
        <fullName>Alpha(1,2)FT 1</fullName>
    </alternativeName>
    <alternativeName>
        <fullName>Fucosyltransferase 1</fullName>
    </alternativeName>
    <alternativeName>
        <fullName>GDP-L-fucose:beta-D-galactoside 2-alpha-L-fucosyltransferase 1</fullName>
    </alternativeName>
    <alternativeName>
        <fullName evidence="2">Type 1 galactoside alpha-(1,2)-fucosyltransferase FUT1</fullName>
        <ecNumber evidence="2">2.4.1.69</ecNumber>
    </alternativeName>
    <alternativeName>
        <fullName evidence="3">Type 2 galactoside alpha-(1,2)-fucosyltransferase FUT1</fullName>
        <ecNumber evidence="3">2.4.1.344</ecNumber>
    </alternativeName>
</protein>
<reference key="1">
    <citation type="submission" date="2003-01" db="EMBL/GenBank/DDBJ databases">
        <title>Molecular evolution of the H (FUT1) gene in New World monkeys (Primates, Platyrrhini): evidence of divergent evolution and purifying selection.</title>
        <authorList>
            <person name="Borges B.N."/>
            <person name="Harada M.L."/>
        </authorList>
    </citation>
    <scope>NUCLEOTIDE SEQUENCE [GENOMIC DNA]</scope>
</reference>
<feature type="chain" id="PRO_0000149104" description="Galactoside alpha-(1,2)-fucosyltransferase 1">
    <location>
        <begin position="1"/>
        <end position="366"/>
    </location>
</feature>
<feature type="topological domain" description="Cytoplasmic" evidence="4">
    <location>
        <begin position="1"/>
        <end position="8"/>
    </location>
</feature>
<feature type="transmembrane region" description="Helical; Signal-anchor for type II membrane protein" evidence="4">
    <location>
        <begin position="9"/>
        <end position="25"/>
    </location>
</feature>
<feature type="topological domain" description="Lumenal" evidence="4">
    <location>
        <begin position="26"/>
        <end position="366"/>
    </location>
</feature>
<feature type="glycosylation site" description="N-linked (GlcNAc...) asparagine" evidence="4">
    <location>
        <position position="66"/>
    </location>
</feature>
<feature type="glycosylation site" description="N-linked (GlcNAc...) asparagine" evidence="4">
    <location>
        <position position="302"/>
    </location>
</feature>
<feature type="glycosylation site" description="N-linked (GlcNAc...) asparagine" evidence="4">
    <location>
        <position position="328"/>
    </location>
</feature>
<accession>Q866F0</accession>
<proteinExistence type="inferred from homology"/>
<sequence length="366" mass="41316">MWPRSHRHLCLAFLLVCVLSAISFLIHFHQDSIRHGLGLSVLCPDRRLVTPAVAIFCLPGTPMSPNTSSSCPQHPASLSGTWTIYPDGRFGNQMGQYATLLALAQLNGRRAFILPAMHAALAPVFRITLPVLAPEVDSRTPWQELRLHDWMSEEYADLGDPFLKLSGFPCSWTFFHHLREQIRSEFTLHDHLREEAQSVLRRLRLGRSGARPRTFVGVHVRRGDYLQVMPQRWKGVVANSAYLREAMDWFRARHEAPVFVVTSNGMEWCRENIDASKGDVMFAGDGQEASPWKDFALLTQCNHTIMTIGTFGFWAAYLAGGDTVYLANFTLPDSEFLKIFKPEAAFLPEWVGINADLSPLWPLAEP</sequence>
<organism>
    <name type="scientific">Saimiri boliviensis boliviensis</name>
    <name type="common">Bolivian squirrel monkey</name>
    <dbReference type="NCBI Taxonomy" id="39432"/>
    <lineage>
        <taxon>Eukaryota</taxon>
        <taxon>Metazoa</taxon>
        <taxon>Chordata</taxon>
        <taxon>Craniata</taxon>
        <taxon>Vertebrata</taxon>
        <taxon>Euteleostomi</taxon>
        <taxon>Mammalia</taxon>
        <taxon>Eutheria</taxon>
        <taxon>Euarchontoglires</taxon>
        <taxon>Primates</taxon>
        <taxon>Haplorrhini</taxon>
        <taxon>Platyrrhini</taxon>
        <taxon>Cebidae</taxon>
        <taxon>Saimiriinae</taxon>
        <taxon>Saimiri</taxon>
    </lineage>
</organism>
<name>FUT1_SAIBB</name>
<dbReference type="EC" id="2.4.1.69" evidence="2"/>
<dbReference type="EC" id="2.4.1.344" evidence="3"/>
<dbReference type="EMBL" id="AY219618">
    <property type="protein sequence ID" value="AAO43060.1"/>
    <property type="molecule type" value="Genomic_DNA"/>
</dbReference>
<dbReference type="SMR" id="Q866F0"/>
<dbReference type="STRING" id="39432.ENSSBOP00000029041"/>
<dbReference type="CAZy" id="GT11">
    <property type="family name" value="Glycosyltransferase Family 11"/>
</dbReference>
<dbReference type="GlyCosmos" id="Q866F0">
    <property type="glycosylation" value="3 sites, No reported glycans"/>
</dbReference>
<dbReference type="UniPathway" id="UPA00378"/>
<dbReference type="Proteomes" id="UP000233220">
    <property type="component" value="Whole Genome Shotgun Assembly"/>
</dbReference>
<dbReference type="GO" id="GO:0032580">
    <property type="term" value="C:Golgi cisterna membrane"/>
    <property type="evidence" value="ECO:0007669"/>
    <property type="project" value="UniProtKB-SubCell"/>
</dbReference>
<dbReference type="GO" id="GO:0031127">
    <property type="term" value="F:alpha-(1,2)-fucosyltransferase activity"/>
    <property type="evidence" value="ECO:0000250"/>
    <property type="project" value="UniProtKB"/>
</dbReference>
<dbReference type="GO" id="GO:0008107">
    <property type="term" value="F:galactoside 2-alpha-L-fucosyltransferase activity"/>
    <property type="evidence" value="ECO:0007669"/>
    <property type="project" value="UniProtKB-EC"/>
</dbReference>
<dbReference type="GO" id="GO:0005975">
    <property type="term" value="P:carbohydrate metabolic process"/>
    <property type="evidence" value="ECO:0007669"/>
    <property type="project" value="InterPro"/>
</dbReference>
<dbReference type="GO" id="GO:0036065">
    <property type="term" value="P:fucosylation"/>
    <property type="evidence" value="ECO:0000250"/>
    <property type="project" value="UniProtKB"/>
</dbReference>
<dbReference type="GO" id="GO:0006629">
    <property type="term" value="P:lipid metabolic process"/>
    <property type="evidence" value="ECO:0007669"/>
    <property type="project" value="UniProtKB-KW"/>
</dbReference>
<dbReference type="GO" id="GO:0021772">
    <property type="term" value="P:olfactory bulb development"/>
    <property type="evidence" value="ECO:0000250"/>
    <property type="project" value="UniProtKB"/>
</dbReference>
<dbReference type="GO" id="GO:0001954">
    <property type="term" value="P:positive regulation of cell-matrix adhesion"/>
    <property type="evidence" value="ECO:0000250"/>
    <property type="project" value="UniProtKB"/>
</dbReference>
<dbReference type="GO" id="GO:0010595">
    <property type="term" value="P:positive regulation of endothelial cell migration"/>
    <property type="evidence" value="ECO:0000250"/>
    <property type="project" value="UniProtKB"/>
</dbReference>
<dbReference type="GO" id="GO:1904906">
    <property type="term" value="P:positive regulation of endothelial cell-matrix adhesion via fibronectin"/>
    <property type="evidence" value="ECO:0000250"/>
    <property type="project" value="UniProtKB"/>
</dbReference>
<dbReference type="GO" id="GO:1903672">
    <property type="term" value="P:positive regulation of sprouting angiogenesis"/>
    <property type="evidence" value="ECO:0000250"/>
    <property type="project" value="UniProtKB"/>
</dbReference>
<dbReference type="GO" id="GO:0006486">
    <property type="term" value="P:protein glycosylation"/>
    <property type="evidence" value="ECO:0000250"/>
    <property type="project" value="UniProtKB"/>
</dbReference>
<dbReference type="GO" id="GO:0030155">
    <property type="term" value="P:regulation of cell adhesion"/>
    <property type="evidence" value="ECO:0000250"/>
    <property type="project" value="UniProtKB"/>
</dbReference>
<dbReference type="GO" id="GO:0001936">
    <property type="term" value="P:regulation of endothelial cell proliferation"/>
    <property type="evidence" value="ECO:0000250"/>
    <property type="project" value="UniProtKB"/>
</dbReference>
<dbReference type="CDD" id="cd11301">
    <property type="entry name" value="Fut1_Fut2_like"/>
    <property type="match status" value="1"/>
</dbReference>
<dbReference type="InterPro" id="IPR002516">
    <property type="entry name" value="Glyco_trans_11"/>
</dbReference>
<dbReference type="PANTHER" id="PTHR11927">
    <property type="entry name" value="GALACTOSIDE 2-L-FUCOSYLTRANSFERASE"/>
    <property type="match status" value="1"/>
</dbReference>
<dbReference type="PANTHER" id="PTHR11927:SF4">
    <property type="entry name" value="GALACTOSIDE ALPHA-(1,2)-FUCOSYLTRANSFERASE 1"/>
    <property type="match status" value="1"/>
</dbReference>
<dbReference type="Pfam" id="PF01531">
    <property type="entry name" value="Glyco_transf_11"/>
    <property type="match status" value="1"/>
</dbReference>
<gene>
    <name evidence="3" type="primary">FUT1</name>
</gene>
<keyword id="KW-0325">Glycoprotein</keyword>
<keyword id="KW-0328">Glycosyltransferase</keyword>
<keyword id="KW-0333">Golgi apparatus</keyword>
<keyword id="KW-0443">Lipid metabolism</keyword>
<keyword id="KW-0472">Membrane</keyword>
<keyword id="KW-1185">Reference proteome</keyword>
<keyword id="KW-0735">Signal-anchor</keyword>
<keyword id="KW-0808">Transferase</keyword>
<keyword id="KW-0812">Transmembrane</keyword>
<keyword id="KW-1133">Transmembrane helix</keyword>
<comment type="function">
    <text evidence="2 3">Catalyzes the transfer of L-fucose, from a guanosine diphosphate-beta-L-fucose, to the terminal galactose residue of glycoconjugates through an alpha(1,2) linkage leading to H antigen synthesis that is an intermediate substrate in the synthesis of ABO blood group antigens. H antigen is essential for maturation of the glomerular layer of the main olfactory bulb, in cell migration and early cell-cell contacts during tumor associated angiogenesis (By similarity). Preferentially fucosylates soluble lactose and to a lesser extent fucosylates glycolipids gangliosides GA1 and GM1a (By similarity).</text>
</comment>
<comment type="catalytic activity">
    <reaction evidence="3">
        <text>a beta-D-galactosyl-(1-&gt;4)-N-acetyl-beta-D-glucosaminyl derivative + GDP-beta-L-fucose = an alpha-L-Fuc-(1-&gt;2)-beta-D-Gal-(1-&gt;4)-beta-D-GlcNAc derivative + GDP + H(+)</text>
        <dbReference type="Rhea" id="RHEA:50668"/>
        <dbReference type="ChEBI" id="CHEBI:15378"/>
        <dbReference type="ChEBI" id="CHEBI:57273"/>
        <dbReference type="ChEBI" id="CHEBI:58189"/>
        <dbReference type="ChEBI" id="CHEBI:133507"/>
        <dbReference type="ChEBI" id="CHEBI:133510"/>
        <dbReference type="EC" id="2.4.1.344"/>
    </reaction>
</comment>
<comment type="catalytic activity">
    <reaction evidence="2">
        <text>a ganglioside GA1 + GDP-beta-L-fucose = a ganglioside Fuc-GA1 + GDP + H(+)</text>
        <dbReference type="Rhea" id="RHEA:48320"/>
        <dbReference type="ChEBI" id="CHEBI:15378"/>
        <dbReference type="ChEBI" id="CHEBI:57273"/>
        <dbReference type="ChEBI" id="CHEBI:58189"/>
        <dbReference type="ChEBI" id="CHEBI:88069"/>
        <dbReference type="ChEBI" id="CHEBI:90262"/>
    </reaction>
    <physiologicalReaction direction="left-to-right" evidence="2">
        <dbReference type="Rhea" id="RHEA:48321"/>
    </physiologicalReaction>
</comment>
<comment type="catalytic activity">
    <reaction evidence="2">
        <text>a beta-D-Gal-(1-&gt;3)-beta-D-GlcNAc-(1-&gt;3)-beta-D-Gal-(1-&gt;4)-beta-D-Glc-(1&lt;-&gt;1')-Cer(d18:1(4E)) + GDP-beta-L-fucose = alpha-L-fucosyl-(1-&gt;2)- beta-D-galactosyl-(1-&gt;3)-N-acetyl-beta-D-glucosaminyl-(1-&gt;3)-beta-D-galactosyl-(1-&gt;4)-beta-D-glucosyl-(1&lt;-&gt;1')-N-acylsphing-4-enine + GDP + H(+)</text>
        <dbReference type="Rhea" id="RHEA:32175"/>
        <dbReference type="ChEBI" id="CHEBI:15378"/>
        <dbReference type="ChEBI" id="CHEBI:17292"/>
        <dbReference type="ChEBI" id="CHEBI:28743"/>
        <dbReference type="ChEBI" id="CHEBI:57273"/>
        <dbReference type="ChEBI" id="CHEBI:58189"/>
        <dbReference type="EC" id="2.4.1.69"/>
    </reaction>
    <physiologicalReaction direction="left-to-right" evidence="2">
        <dbReference type="Rhea" id="RHEA:32176"/>
    </physiologicalReaction>
</comment>
<comment type="catalytic activity">
    <reaction evidence="2">
        <text>a neolactoside nLc4Cer(d18:1(4E)) + GDP-beta-L-fucose = a neolactoside IV(2)-alpha-Fuc-nLc4Cer(d18:1(4E)) + GDP + H(+)</text>
        <dbReference type="Rhea" id="RHEA:48304"/>
        <dbReference type="ChEBI" id="CHEBI:15378"/>
        <dbReference type="ChEBI" id="CHEBI:17006"/>
        <dbReference type="ChEBI" id="CHEBI:28691"/>
        <dbReference type="ChEBI" id="CHEBI:57273"/>
        <dbReference type="ChEBI" id="CHEBI:58189"/>
    </reaction>
    <physiologicalReaction direction="left-to-right" evidence="2">
        <dbReference type="Rhea" id="RHEA:48305"/>
    </physiologicalReaction>
</comment>
<comment type="catalytic activity">
    <reaction evidence="1">
        <text>a ganglioside GM1 + GDP-beta-L-fucose = a ganglioside Fuc-GM1 + GDP + H(+)</text>
        <dbReference type="Rhea" id="RHEA:48292"/>
        <dbReference type="ChEBI" id="CHEBI:15378"/>
        <dbReference type="ChEBI" id="CHEBI:57273"/>
        <dbReference type="ChEBI" id="CHEBI:58189"/>
        <dbReference type="ChEBI" id="CHEBI:82639"/>
        <dbReference type="ChEBI" id="CHEBI:90189"/>
    </reaction>
    <physiologicalReaction direction="left-to-right" evidence="1">
        <dbReference type="Rhea" id="RHEA:48293"/>
    </physiologicalReaction>
</comment>
<comment type="catalytic activity">
    <reaction evidence="1">
        <text>beta-D-galactosyl-(1-&gt;3)-N-acetyl-D-galactosamine + GDP-beta-L-fucose = alpha-L-fucosyl-(1-&gt;2)-beta-D-galactosyl-(1-&gt;3)-N-acetyl-D-galactosamine + GDP + H(+)</text>
        <dbReference type="Rhea" id="RHEA:62964"/>
        <dbReference type="ChEBI" id="CHEBI:15378"/>
        <dbReference type="ChEBI" id="CHEBI:57273"/>
        <dbReference type="ChEBI" id="CHEBI:58189"/>
        <dbReference type="ChEBI" id="CHEBI:84728"/>
        <dbReference type="ChEBI" id="CHEBI:546807"/>
    </reaction>
    <physiologicalReaction direction="left-to-right" evidence="1">
        <dbReference type="Rhea" id="RHEA:62965"/>
    </physiologicalReaction>
</comment>
<comment type="pathway">
    <text evidence="3">Protein modification; protein glycosylation.</text>
</comment>
<comment type="subcellular location">
    <subcellularLocation>
        <location evidence="2">Golgi apparatus</location>
        <location evidence="2">Golgi stack membrane</location>
        <topology evidence="2">Single-pass type II membrane protein</topology>
    </subcellularLocation>
    <text evidence="2">Membrane-bound form in trans cisternae of Golgi.</text>
</comment>
<comment type="similarity">
    <text evidence="5">Belongs to the glycosyltransferase 11 family.</text>
</comment>
<evidence type="ECO:0000250" key="1">
    <source>
        <dbReference type="UniProtKB" id="F6Q1T7"/>
    </source>
</evidence>
<evidence type="ECO:0000250" key="2">
    <source>
        <dbReference type="UniProtKB" id="O09160"/>
    </source>
</evidence>
<evidence type="ECO:0000250" key="3">
    <source>
        <dbReference type="UniProtKB" id="P19526"/>
    </source>
</evidence>
<evidence type="ECO:0000255" key="4"/>
<evidence type="ECO:0000305" key="5"/>